<feature type="chain" id="PRO_0000137462" description="Translation initiation factor 2 subunit gamma">
    <location>
        <begin position="1"/>
        <end position="410"/>
    </location>
</feature>
<feature type="domain" description="tr-type G" evidence="2">
    <location>
        <begin position="9"/>
        <end position="202"/>
    </location>
</feature>
<feature type="region of interest" description="G1" evidence="1">
    <location>
        <begin position="18"/>
        <end position="25"/>
    </location>
</feature>
<feature type="region of interest" description="G2" evidence="1">
    <location>
        <begin position="46"/>
        <end position="50"/>
    </location>
</feature>
<feature type="region of interest" description="G3" evidence="1">
    <location>
        <begin position="90"/>
        <end position="93"/>
    </location>
</feature>
<feature type="region of interest" description="G4" evidence="1">
    <location>
        <begin position="145"/>
        <end position="148"/>
    </location>
</feature>
<feature type="region of interest" description="G5" evidence="1">
    <location>
        <begin position="180"/>
        <end position="182"/>
    </location>
</feature>
<feature type="binding site" evidence="2">
    <location>
        <begin position="21"/>
        <end position="26"/>
    </location>
    <ligand>
        <name>GTP</name>
        <dbReference type="ChEBI" id="CHEBI:37565"/>
    </ligand>
</feature>
<feature type="binding site" evidence="2">
    <location>
        <position position="21"/>
    </location>
    <ligand>
        <name>Mg(2+)</name>
        <dbReference type="ChEBI" id="CHEBI:18420"/>
        <label>2</label>
    </ligand>
</feature>
<feature type="binding site" evidence="2">
    <location>
        <position position="25"/>
    </location>
    <ligand>
        <name>Mg(2+)</name>
        <dbReference type="ChEBI" id="CHEBI:18420"/>
        <label>1</label>
    </ligand>
</feature>
<feature type="binding site" evidence="2">
    <location>
        <position position="46"/>
    </location>
    <ligand>
        <name>Mg(2+)</name>
        <dbReference type="ChEBI" id="CHEBI:18420"/>
        <label>2</label>
    </ligand>
</feature>
<feature type="binding site" evidence="2">
    <location>
        <position position="48"/>
    </location>
    <ligand>
        <name>Mg(2+)</name>
        <dbReference type="ChEBI" id="CHEBI:18420"/>
        <label>1</label>
    </ligand>
</feature>
<feature type="binding site" evidence="2">
    <location>
        <position position="61"/>
    </location>
    <ligand>
        <name>Zn(2+)</name>
        <dbReference type="ChEBI" id="CHEBI:29105"/>
    </ligand>
</feature>
<feature type="binding site" evidence="2">
    <location>
        <position position="64"/>
    </location>
    <ligand>
        <name>Zn(2+)</name>
        <dbReference type="ChEBI" id="CHEBI:29105"/>
    </ligand>
</feature>
<feature type="binding site" evidence="2">
    <location>
        <position position="73"/>
    </location>
    <ligand>
        <name>Zn(2+)</name>
        <dbReference type="ChEBI" id="CHEBI:29105"/>
    </ligand>
</feature>
<feature type="binding site" evidence="2">
    <location>
        <position position="76"/>
    </location>
    <ligand>
        <name>Zn(2+)</name>
        <dbReference type="ChEBI" id="CHEBI:29105"/>
    </ligand>
</feature>
<feature type="binding site" evidence="2">
    <location>
        <begin position="145"/>
        <end position="148"/>
    </location>
    <ligand>
        <name>GTP</name>
        <dbReference type="ChEBI" id="CHEBI:37565"/>
    </ligand>
</feature>
<feature type="binding site" evidence="2">
    <location>
        <begin position="180"/>
        <end position="182"/>
    </location>
    <ligand>
        <name>GTP</name>
        <dbReference type="ChEBI" id="CHEBI:37565"/>
    </ligand>
</feature>
<comment type="function">
    <text evidence="2">eIF-2 functions in the early steps of protein synthesis by forming a ternary complex with GTP and initiator tRNA.</text>
</comment>
<comment type="catalytic activity">
    <reaction evidence="2">
        <text>GTP + H2O = GDP + phosphate + H(+)</text>
        <dbReference type="Rhea" id="RHEA:19669"/>
        <dbReference type="ChEBI" id="CHEBI:15377"/>
        <dbReference type="ChEBI" id="CHEBI:15378"/>
        <dbReference type="ChEBI" id="CHEBI:37565"/>
        <dbReference type="ChEBI" id="CHEBI:43474"/>
        <dbReference type="ChEBI" id="CHEBI:58189"/>
        <dbReference type="EC" id="3.6.5.3"/>
    </reaction>
</comment>
<comment type="cofactor">
    <cofactor evidence="2">
        <name>Mg(2+)</name>
        <dbReference type="ChEBI" id="CHEBI:18420"/>
    </cofactor>
</comment>
<comment type="subunit">
    <text evidence="2">Heterotrimer composed of an alpha, a beta and a gamma chain.</text>
</comment>
<comment type="similarity">
    <text evidence="2">Belongs to the TRAFAC class translation factor GTPase superfamily. Classic translation factor GTPase family. EIF2G subfamily.</text>
</comment>
<dbReference type="EC" id="3.6.5.3" evidence="2"/>
<dbReference type="EMBL" id="AP006878">
    <property type="protein sequence ID" value="BAD86135.1"/>
    <property type="molecule type" value="Genomic_DNA"/>
</dbReference>
<dbReference type="RefSeq" id="WP_011250896.1">
    <property type="nucleotide sequence ID" value="NC_006624.1"/>
</dbReference>
<dbReference type="SMR" id="Q5JDL3"/>
<dbReference type="FunCoup" id="Q5JDL3">
    <property type="interactions" value="172"/>
</dbReference>
<dbReference type="STRING" id="69014.TK1946"/>
<dbReference type="EnsemblBacteria" id="BAD86135">
    <property type="protein sequence ID" value="BAD86135"/>
    <property type="gene ID" value="TK1946"/>
</dbReference>
<dbReference type="GeneID" id="78448477"/>
<dbReference type="KEGG" id="tko:TK1946"/>
<dbReference type="PATRIC" id="fig|69014.16.peg.1901"/>
<dbReference type="eggNOG" id="arCOG01563">
    <property type="taxonomic scope" value="Archaea"/>
</dbReference>
<dbReference type="HOGENOM" id="CLU_027154_0_1_2"/>
<dbReference type="InParanoid" id="Q5JDL3"/>
<dbReference type="OrthoDB" id="7798at2157"/>
<dbReference type="PhylomeDB" id="Q5JDL3"/>
<dbReference type="Proteomes" id="UP000000536">
    <property type="component" value="Chromosome"/>
</dbReference>
<dbReference type="GO" id="GO:0005525">
    <property type="term" value="F:GTP binding"/>
    <property type="evidence" value="ECO:0007669"/>
    <property type="project" value="UniProtKB-UniRule"/>
</dbReference>
<dbReference type="GO" id="GO:0003924">
    <property type="term" value="F:GTPase activity"/>
    <property type="evidence" value="ECO:0007669"/>
    <property type="project" value="InterPro"/>
</dbReference>
<dbReference type="GO" id="GO:0046872">
    <property type="term" value="F:metal ion binding"/>
    <property type="evidence" value="ECO:0007669"/>
    <property type="project" value="UniProtKB-KW"/>
</dbReference>
<dbReference type="GO" id="GO:0003746">
    <property type="term" value="F:translation elongation factor activity"/>
    <property type="evidence" value="ECO:0007669"/>
    <property type="project" value="UniProtKB-UniRule"/>
</dbReference>
<dbReference type="GO" id="GO:0003743">
    <property type="term" value="F:translation initiation factor activity"/>
    <property type="evidence" value="ECO:0000318"/>
    <property type="project" value="GO_Central"/>
</dbReference>
<dbReference type="GO" id="GO:0000049">
    <property type="term" value="F:tRNA binding"/>
    <property type="evidence" value="ECO:0007669"/>
    <property type="project" value="InterPro"/>
</dbReference>
<dbReference type="GO" id="GO:0001731">
    <property type="term" value="P:formation of translation preinitiation complex"/>
    <property type="evidence" value="ECO:0000318"/>
    <property type="project" value="GO_Central"/>
</dbReference>
<dbReference type="CDD" id="cd01888">
    <property type="entry name" value="eIF2_gamma"/>
    <property type="match status" value="1"/>
</dbReference>
<dbReference type="CDD" id="cd03688">
    <property type="entry name" value="eIF2_gamma_II"/>
    <property type="match status" value="1"/>
</dbReference>
<dbReference type="CDD" id="cd15490">
    <property type="entry name" value="eIF2_gamma_III"/>
    <property type="match status" value="1"/>
</dbReference>
<dbReference type="FunFam" id="2.40.30.10:FF:000009">
    <property type="entry name" value="Eukaryotic translation initiation factor 2 subunit gamma"/>
    <property type="match status" value="1"/>
</dbReference>
<dbReference type="FunFam" id="2.40.30.10:FF:000075">
    <property type="entry name" value="Translation initiation factor 2 subunit gamma"/>
    <property type="match status" value="1"/>
</dbReference>
<dbReference type="Gene3D" id="3.40.50.300">
    <property type="entry name" value="P-loop containing nucleotide triphosphate hydrolases"/>
    <property type="match status" value="1"/>
</dbReference>
<dbReference type="Gene3D" id="2.40.30.10">
    <property type="entry name" value="Translation factors"/>
    <property type="match status" value="2"/>
</dbReference>
<dbReference type="HAMAP" id="MF_00119">
    <property type="entry name" value="eIF_2_gamma"/>
    <property type="match status" value="1"/>
</dbReference>
<dbReference type="InterPro" id="IPR004161">
    <property type="entry name" value="EFTu-like_2"/>
</dbReference>
<dbReference type="InterPro" id="IPR050543">
    <property type="entry name" value="eIF2G"/>
</dbReference>
<dbReference type="InterPro" id="IPR015256">
    <property type="entry name" value="eIF2g_C"/>
</dbReference>
<dbReference type="InterPro" id="IPR044127">
    <property type="entry name" value="eIF2g_dom_2"/>
</dbReference>
<dbReference type="InterPro" id="IPR044128">
    <property type="entry name" value="eIF2g_GTP-bd"/>
</dbReference>
<dbReference type="InterPro" id="IPR027417">
    <property type="entry name" value="P-loop_NTPase"/>
</dbReference>
<dbReference type="InterPro" id="IPR005225">
    <property type="entry name" value="Small_GTP-bd"/>
</dbReference>
<dbReference type="InterPro" id="IPR000795">
    <property type="entry name" value="T_Tr_GTP-bd_dom"/>
</dbReference>
<dbReference type="InterPro" id="IPR022424">
    <property type="entry name" value="TIF2_gsu"/>
</dbReference>
<dbReference type="InterPro" id="IPR009000">
    <property type="entry name" value="Transl_B-barrel_sf"/>
</dbReference>
<dbReference type="InterPro" id="IPR009001">
    <property type="entry name" value="Transl_elong_EF1A/Init_IF2_C"/>
</dbReference>
<dbReference type="NCBIfam" id="TIGR03680">
    <property type="entry name" value="eif2g_arch"/>
    <property type="match status" value="1"/>
</dbReference>
<dbReference type="NCBIfam" id="NF003077">
    <property type="entry name" value="PRK04000.1"/>
    <property type="match status" value="1"/>
</dbReference>
<dbReference type="NCBIfam" id="TIGR00231">
    <property type="entry name" value="small_GTP"/>
    <property type="match status" value="1"/>
</dbReference>
<dbReference type="PANTHER" id="PTHR42854">
    <property type="entry name" value="EUKARYOTIC TRANSLATION INITIATION FACTOR 2 SUBUNIT 3 FAMILY MEMBER"/>
    <property type="match status" value="1"/>
</dbReference>
<dbReference type="PANTHER" id="PTHR42854:SF3">
    <property type="entry name" value="EUKARYOTIC TRANSLATION INITIATION FACTOR 2 SUBUNIT 3-RELATED"/>
    <property type="match status" value="1"/>
</dbReference>
<dbReference type="Pfam" id="PF09173">
    <property type="entry name" value="eIF2_C"/>
    <property type="match status" value="1"/>
</dbReference>
<dbReference type="Pfam" id="PF00009">
    <property type="entry name" value="GTP_EFTU"/>
    <property type="match status" value="1"/>
</dbReference>
<dbReference type="Pfam" id="PF03144">
    <property type="entry name" value="GTP_EFTU_D2"/>
    <property type="match status" value="1"/>
</dbReference>
<dbReference type="PRINTS" id="PR00315">
    <property type="entry name" value="ELONGATNFCT"/>
</dbReference>
<dbReference type="SUPFAM" id="SSF50465">
    <property type="entry name" value="EF-Tu/eEF-1alpha/eIF2-gamma C-terminal domain"/>
    <property type="match status" value="1"/>
</dbReference>
<dbReference type="SUPFAM" id="SSF52540">
    <property type="entry name" value="P-loop containing nucleoside triphosphate hydrolases"/>
    <property type="match status" value="1"/>
</dbReference>
<dbReference type="SUPFAM" id="SSF50447">
    <property type="entry name" value="Translation proteins"/>
    <property type="match status" value="1"/>
</dbReference>
<dbReference type="PROSITE" id="PS51722">
    <property type="entry name" value="G_TR_2"/>
    <property type="match status" value="1"/>
</dbReference>
<gene>
    <name evidence="2" type="primary">eif2g</name>
    <name type="ordered locus">TK1946</name>
</gene>
<sequence length="410" mass="44918">MAKKKEFRQAEVNIGMVGHVDHGKTTLTKALTGIWTDTHSEELRRGITIKIGFADAEIRKCPHCGKYSTSPVCPYCGHETEFERRVSFIDAPGHEALMTTMLAGASLMDGAVLVIAANEGVMPQTREHLMALQIVGNRNIVIALNKIELVDREKVMERYQEIKEFVKGTVAENAPIIPISALHGANVDVLLAAIEEFIPTPKRDPNKPPKMLVLRSFDVNKPGTPPEKLVGGVIGGSIVQGKLRVGDEIEIRPGVPYEEHGRIKYEPITTEITSLQAGGRFVEEAYPGGLVGVGTKLDPFLTKGDLMAGNVVGKPGQLPPVWDELTLEVHLLERVVGTEEELRVEPIKRREVLLLNVGTARTMGLVTGLGKDTVELKLQIPVCAEVGDRVAISRQVGSRWRLIGYGFIRE</sequence>
<reference key="1">
    <citation type="journal article" date="2005" name="Genome Res.">
        <title>Complete genome sequence of the hyperthermophilic archaeon Thermococcus kodakaraensis KOD1 and comparison with Pyrococcus genomes.</title>
        <authorList>
            <person name="Fukui T."/>
            <person name="Atomi H."/>
            <person name="Kanai T."/>
            <person name="Matsumi R."/>
            <person name="Fujiwara S."/>
            <person name="Imanaka T."/>
        </authorList>
    </citation>
    <scope>NUCLEOTIDE SEQUENCE [LARGE SCALE GENOMIC DNA]</scope>
    <source>
        <strain>ATCC BAA-918 / JCM 12380 / KOD1</strain>
    </source>
</reference>
<name>IF2G_THEKO</name>
<keyword id="KW-0342">GTP-binding</keyword>
<keyword id="KW-0378">Hydrolase</keyword>
<keyword id="KW-0396">Initiation factor</keyword>
<keyword id="KW-0460">Magnesium</keyword>
<keyword id="KW-0479">Metal-binding</keyword>
<keyword id="KW-0547">Nucleotide-binding</keyword>
<keyword id="KW-0648">Protein biosynthesis</keyword>
<keyword id="KW-1185">Reference proteome</keyword>
<keyword id="KW-0862">Zinc</keyword>
<proteinExistence type="inferred from homology"/>
<organism>
    <name type="scientific">Thermococcus kodakarensis (strain ATCC BAA-918 / JCM 12380 / KOD1)</name>
    <name type="common">Pyrococcus kodakaraensis (strain KOD1)</name>
    <dbReference type="NCBI Taxonomy" id="69014"/>
    <lineage>
        <taxon>Archaea</taxon>
        <taxon>Methanobacteriati</taxon>
        <taxon>Methanobacteriota</taxon>
        <taxon>Thermococci</taxon>
        <taxon>Thermococcales</taxon>
        <taxon>Thermococcaceae</taxon>
        <taxon>Thermococcus</taxon>
    </lineage>
</organism>
<accession>Q5JDL3</accession>
<protein>
    <recommendedName>
        <fullName evidence="2">Translation initiation factor 2 subunit gamma</fullName>
        <ecNumber evidence="2">3.6.5.3</ecNumber>
    </recommendedName>
    <alternativeName>
        <fullName evidence="2">aIF2-gamma</fullName>
    </alternativeName>
    <alternativeName>
        <fullName evidence="2">eIF-2-gamma</fullName>
    </alternativeName>
</protein>
<evidence type="ECO:0000250" key="1">
    <source>
        <dbReference type="UniProtKB" id="Q980A5"/>
    </source>
</evidence>
<evidence type="ECO:0000255" key="2">
    <source>
        <dbReference type="HAMAP-Rule" id="MF_00119"/>
    </source>
</evidence>